<reference key="1">
    <citation type="journal article" date="2001" name="Lancet">
        <title>Whole genome sequencing of meticillin-resistant Staphylococcus aureus.</title>
        <authorList>
            <person name="Kuroda M."/>
            <person name="Ohta T."/>
            <person name="Uchiyama I."/>
            <person name="Baba T."/>
            <person name="Yuzawa H."/>
            <person name="Kobayashi I."/>
            <person name="Cui L."/>
            <person name="Oguchi A."/>
            <person name="Aoki K."/>
            <person name="Nagai Y."/>
            <person name="Lian J.-Q."/>
            <person name="Ito T."/>
            <person name="Kanamori M."/>
            <person name="Matsumaru H."/>
            <person name="Maruyama A."/>
            <person name="Murakami H."/>
            <person name="Hosoyama A."/>
            <person name="Mizutani-Ui Y."/>
            <person name="Takahashi N.K."/>
            <person name="Sawano T."/>
            <person name="Inoue R."/>
            <person name="Kaito C."/>
            <person name="Sekimizu K."/>
            <person name="Hirakawa H."/>
            <person name="Kuhara S."/>
            <person name="Goto S."/>
            <person name="Yabuzaki J."/>
            <person name="Kanehisa M."/>
            <person name="Yamashita A."/>
            <person name="Oshima K."/>
            <person name="Furuya K."/>
            <person name="Yoshino C."/>
            <person name="Shiba T."/>
            <person name="Hattori M."/>
            <person name="Ogasawara N."/>
            <person name="Hayashi H."/>
            <person name="Hiramatsu K."/>
        </authorList>
    </citation>
    <scope>NUCLEOTIDE SEQUENCE [LARGE SCALE GENOMIC DNA]</scope>
    <source>
        <strain>N315</strain>
    </source>
</reference>
<reference key="2">
    <citation type="submission" date="2007-10" db="UniProtKB">
        <title>Shotgun proteomic analysis of total and membrane protein extracts of S. aureus strain N315.</title>
        <authorList>
            <person name="Vaezzadeh A.R."/>
            <person name="Deshusses J."/>
            <person name="Lescuyer P."/>
            <person name="Hochstrasser D.F."/>
        </authorList>
    </citation>
    <scope>IDENTIFICATION BY MASS SPECTROMETRY [LARGE SCALE ANALYSIS]</scope>
    <source>
        <strain>N315</strain>
    </source>
</reference>
<protein>
    <recommendedName>
        <fullName evidence="1">Energy-coupling factor transporter ATP-binding protein EcfA2</fullName>
        <shortName evidence="1">ECF transporter A component EcfA2</shortName>
        <ecNumber evidence="1">7.-.-.-</ecNumber>
    </recommendedName>
</protein>
<evidence type="ECO:0000255" key="1">
    <source>
        <dbReference type="HAMAP-Rule" id="MF_01710"/>
    </source>
</evidence>
<gene>
    <name evidence="1" type="primary">ecfA2</name>
    <name type="synonym">cbiO2</name>
    <name type="ordered locus">SA2020</name>
</gene>
<organism>
    <name type="scientific">Staphylococcus aureus (strain N315)</name>
    <dbReference type="NCBI Taxonomy" id="158879"/>
    <lineage>
        <taxon>Bacteria</taxon>
        <taxon>Bacillati</taxon>
        <taxon>Bacillota</taxon>
        <taxon>Bacilli</taxon>
        <taxon>Bacillales</taxon>
        <taxon>Staphylococcaceae</taxon>
        <taxon>Staphylococcus</taxon>
    </lineage>
</organism>
<keyword id="KW-0067">ATP-binding</keyword>
<keyword id="KW-1003">Cell membrane</keyword>
<keyword id="KW-0472">Membrane</keyword>
<keyword id="KW-0547">Nucleotide-binding</keyword>
<keyword id="KW-1278">Translocase</keyword>
<keyword id="KW-0813">Transport</keyword>
<accession>Q7A471</accession>
<feature type="chain" id="PRO_0000092068" description="Energy-coupling factor transporter ATP-binding protein EcfA2">
    <location>
        <begin position="1"/>
        <end position="286"/>
    </location>
</feature>
<feature type="domain" description="ABC transporter" evidence="1">
    <location>
        <begin position="3"/>
        <end position="246"/>
    </location>
</feature>
<feature type="binding site" evidence="1">
    <location>
        <begin position="40"/>
        <end position="47"/>
    </location>
    <ligand>
        <name>ATP</name>
        <dbReference type="ChEBI" id="CHEBI:30616"/>
    </ligand>
</feature>
<name>ECFA2_STAAN</name>
<comment type="function">
    <text evidence="1">ATP-binding (A) component of a common energy-coupling factor (ECF) ABC-transporter complex. Unlike classic ABC transporters this ECF transporter provides the energy necessary to transport a number of different substrates.</text>
</comment>
<comment type="subunit">
    <text evidence="1">Forms a stable energy-coupling factor (ECF) transporter complex composed of 2 membrane-embedded substrate-binding proteins (S component), 2 ATP-binding proteins (A component) and 2 transmembrane proteins (T component).</text>
</comment>
<comment type="subcellular location">
    <subcellularLocation>
        <location evidence="1">Cell membrane</location>
        <topology evidence="1">Peripheral membrane protein</topology>
    </subcellularLocation>
</comment>
<comment type="similarity">
    <text evidence="1">Belongs to the ABC transporter superfamily. Energy-coupling factor EcfA family.</text>
</comment>
<sequence length="286" mass="32919">MTIRFDNVSYTYQKGTPYQHQAIHDVNTEFEQGKYYAIVGQTGSGKSTLIQNINALLKPTTGTVTVDDITITHKTKDKYIRPVRKRIGMVFQFPESQLFEDTVEREMIFGPKNFKMNLDEAKNYAHRLLMDLGFSRDVMSQSPFQMSGGQMRKIAIVSILAMNPDIIVVDEPTAGLDPQSKRQVMRLLKSLQTDENKAIILISHDMNEVARYADEVIVMKEGSIVSQTSPKELFKDKKKLADWHIGLPEIVQLQYDFEQKYQTKLKDIALTEEAFVSLYKEWQHEK</sequence>
<proteinExistence type="evidence at protein level"/>
<dbReference type="EC" id="7.-.-.-" evidence="1"/>
<dbReference type="EMBL" id="BA000018">
    <property type="protein sequence ID" value="BAB43313.1"/>
    <property type="molecule type" value="Genomic_DNA"/>
</dbReference>
<dbReference type="PIR" id="H90018">
    <property type="entry name" value="H90018"/>
</dbReference>
<dbReference type="RefSeq" id="WP_000155386.1">
    <property type="nucleotide sequence ID" value="NC_002745.2"/>
</dbReference>
<dbReference type="SMR" id="Q7A471"/>
<dbReference type="EnsemblBacteria" id="BAB43313">
    <property type="protein sequence ID" value="BAB43313"/>
    <property type="gene ID" value="BAB43313"/>
</dbReference>
<dbReference type="KEGG" id="sau:SA2020"/>
<dbReference type="HOGENOM" id="CLU_000604_1_22_9"/>
<dbReference type="GO" id="GO:0043190">
    <property type="term" value="C:ATP-binding cassette (ABC) transporter complex"/>
    <property type="evidence" value="ECO:0007669"/>
    <property type="project" value="TreeGrafter"/>
</dbReference>
<dbReference type="GO" id="GO:0005524">
    <property type="term" value="F:ATP binding"/>
    <property type="evidence" value="ECO:0007669"/>
    <property type="project" value="UniProtKB-KW"/>
</dbReference>
<dbReference type="GO" id="GO:0016887">
    <property type="term" value="F:ATP hydrolysis activity"/>
    <property type="evidence" value="ECO:0007669"/>
    <property type="project" value="InterPro"/>
</dbReference>
<dbReference type="GO" id="GO:0042626">
    <property type="term" value="F:ATPase-coupled transmembrane transporter activity"/>
    <property type="evidence" value="ECO:0007669"/>
    <property type="project" value="TreeGrafter"/>
</dbReference>
<dbReference type="CDD" id="cd03225">
    <property type="entry name" value="ABC_cobalt_CbiO_domain1"/>
    <property type="match status" value="1"/>
</dbReference>
<dbReference type="FunFam" id="3.40.50.300:FF:000224">
    <property type="entry name" value="Energy-coupling factor transporter ATP-binding protein EcfA"/>
    <property type="match status" value="1"/>
</dbReference>
<dbReference type="Gene3D" id="3.40.50.300">
    <property type="entry name" value="P-loop containing nucleotide triphosphate hydrolases"/>
    <property type="match status" value="1"/>
</dbReference>
<dbReference type="InterPro" id="IPR003593">
    <property type="entry name" value="AAA+_ATPase"/>
</dbReference>
<dbReference type="InterPro" id="IPR003439">
    <property type="entry name" value="ABC_transporter-like_ATP-bd"/>
</dbReference>
<dbReference type="InterPro" id="IPR017871">
    <property type="entry name" value="ABC_transporter-like_CS"/>
</dbReference>
<dbReference type="InterPro" id="IPR015856">
    <property type="entry name" value="ABC_transpr_CbiO/EcfA_su"/>
</dbReference>
<dbReference type="InterPro" id="IPR050095">
    <property type="entry name" value="ECF_ABC_transporter_ATP-bd"/>
</dbReference>
<dbReference type="InterPro" id="IPR030946">
    <property type="entry name" value="EcfA2"/>
</dbReference>
<dbReference type="InterPro" id="IPR027417">
    <property type="entry name" value="P-loop_NTPase"/>
</dbReference>
<dbReference type="NCBIfam" id="TIGR04521">
    <property type="entry name" value="ECF_ATPase_2"/>
    <property type="match status" value="1"/>
</dbReference>
<dbReference type="NCBIfam" id="NF010166">
    <property type="entry name" value="PRK13646.1"/>
    <property type="match status" value="1"/>
</dbReference>
<dbReference type="PANTHER" id="PTHR43553:SF27">
    <property type="entry name" value="ENERGY-COUPLING FACTOR TRANSPORTER ATP-BINDING PROTEIN ECFA2"/>
    <property type="match status" value="1"/>
</dbReference>
<dbReference type="PANTHER" id="PTHR43553">
    <property type="entry name" value="HEAVY METAL TRANSPORTER"/>
    <property type="match status" value="1"/>
</dbReference>
<dbReference type="Pfam" id="PF00005">
    <property type="entry name" value="ABC_tran"/>
    <property type="match status" value="1"/>
</dbReference>
<dbReference type="SMART" id="SM00382">
    <property type="entry name" value="AAA"/>
    <property type="match status" value="1"/>
</dbReference>
<dbReference type="SUPFAM" id="SSF52540">
    <property type="entry name" value="P-loop containing nucleoside triphosphate hydrolases"/>
    <property type="match status" value="1"/>
</dbReference>
<dbReference type="PROSITE" id="PS00211">
    <property type="entry name" value="ABC_TRANSPORTER_1"/>
    <property type="match status" value="1"/>
</dbReference>
<dbReference type="PROSITE" id="PS50893">
    <property type="entry name" value="ABC_TRANSPORTER_2"/>
    <property type="match status" value="1"/>
</dbReference>
<dbReference type="PROSITE" id="PS51246">
    <property type="entry name" value="CBIO"/>
    <property type="match status" value="1"/>
</dbReference>